<proteinExistence type="inferred from homology"/>
<accession>Q9KPT6</accession>
<comment type="function">
    <text evidence="1">Catalyzes the hydrolysis of esters.</text>
</comment>
<comment type="catalytic activity">
    <reaction evidence="1">
        <text>a carboxylic ester + H2O = an alcohol + a carboxylate + H(+)</text>
        <dbReference type="Rhea" id="RHEA:21164"/>
        <dbReference type="ChEBI" id="CHEBI:15377"/>
        <dbReference type="ChEBI" id="CHEBI:15378"/>
        <dbReference type="ChEBI" id="CHEBI:29067"/>
        <dbReference type="ChEBI" id="CHEBI:30879"/>
        <dbReference type="ChEBI" id="CHEBI:33308"/>
        <dbReference type="EC" id="3.1.1.1"/>
    </reaction>
</comment>
<comment type="similarity">
    <text evidence="1">Belongs to the FrsA family.</text>
</comment>
<protein>
    <recommendedName>
        <fullName evidence="1">Esterase FrsA</fullName>
        <ecNumber evidence="1">3.1.1.1</ecNumber>
    </recommendedName>
</protein>
<feature type="chain" id="PRO_0000197159" description="Esterase FrsA">
    <location>
        <begin position="1"/>
        <end position="415"/>
    </location>
</feature>
<sequence>MSEASSKNLSETLFQNHKQAKETSSLTQYMPSSLELLDTRREQSSQAWYRNLRRLQWIWQGVDPVEQEEILARIASSKHSRTHDEWLDTVMGYRSGNWTYEWTRVGMLHQKQAAERQGEEAADQMFAAALYYSIAGYPHLRNDNLALQAQVLANNAYQEAAKLTGFVVKRLEFSYQNKKIAGYLHLRNTDSPKPVVLVSAGLDSLQTDMWRLFRDYLAKRDIAMLTIDMPSLGASSHWPLTEDSSCLHQAVLNQLADLPWVDHFRIGLIGFRFGGNAMARLAFLESDKVKACVSLGAPIHDIFTSPNKLAAMPKMYLDVLASRLGKNVVDVRSLSGQLMAWSLKVQGFMSGRRTKTPILALGLEGDPVSPYSDNQLVALFSQGGQAKKVKSKTISQGYEQSLDLAINWLEDELCK</sequence>
<keyword id="KW-0378">Hydrolase</keyword>
<keyword id="KW-1185">Reference proteome</keyword>
<keyword id="KW-0719">Serine esterase</keyword>
<evidence type="ECO:0000255" key="1">
    <source>
        <dbReference type="HAMAP-Rule" id="MF_01063"/>
    </source>
</evidence>
<dbReference type="EC" id="3.1.1.1" evidence="1"/>
<dbReference type="EMBL" id="AE003852">
    <property type="protein sequence ID" value="AAF95420.1"/>
    <property type="molecule type" value="Genomic_DNA"/>
</dbReference>
<dbReference type="PIR" id="H82095">
    <property type="entry name" value="H82095"/>
</dbReference>
<dbReference type="RefSeq" id="NP_231907.1">
    <property type="nucleotide sequence ID" value="NC_002505.1"/>
</dbReference>
<dbReference type="RefSeq" id="WP_001287570.1">
    <property type="nucleotide sequence ID" value="NZ_LT906614.1"/>
</dbReference>
<dbReference type="SMR" id="Q9KPT6"/>
<dbReference type="STRING" id="243277.VC_2276"/>
<dbReference type="ESTHER" id="vibch-y2276">
    <property type="family name" value="Duf_1100-R"/>
</dbReference>
<dbReference type="DNASU" id="2613198"/>
<dbReference type="EnsemblBacteria" id="AAF95420">
    <property type="protein sequence ID" value="AAF95420"/>
    <property type="gene ID" value="VC_2276"/>
</dbReference>
<dbReference type="GeneID" id="69719100"/>
<dbReference type="KEGG" id="vch:VC_2276"/>
<dbReference type="PATRIC" id="fig|243277.26.peg.2171"/>
<dbReference type="eggNOG" id="COG1073">
    <property type="taxonomic scope" value="Bacteria"/>
</dbReference>
<dbReference type="HOGENOM" id="CLU_036819_0_0_6"/>
<dbReference type="Proteomes" id="UP000000584">
    <property type="component" value="Chromosome 1"/>
</dbReference>
<dbReference type="GO" id="GO:0106435">
    <property type="term" value="F:carboxylesterase activity"/>
    <property type="evidence" value="ECO:0007669"/>
    <property type="project" value="UniProtKB-EC"/>
</dbReference>
<dbReference type="GO" id="GO:0016787">
    <property type="term" value="F:hydrolase activity"/>
    <property type="evidence" value="ECO:0000318"/>
    <property type="project" value="GO_Central"/>
</dbReference>
<dbReference type="Gene3D" id="3.40.50.1820">
    <property type="entry name" value="alpha/beta hydrolase"/>
    <property type="match status" value="1"/>
</dbReference>
<dbReference type="HAMAP" id="MF_01063">
    <property type="entry name" value="FrsA"/>
    <property type="match status" value="1"/>
</dbReference>
<dbReference type="InterPro" id="IPR029058">
    <property type="entry name" value="AB_hydrolase_fold"/>
</dbReference>
<dbReference type="InterPro" id="IPR043423">
    <property type="entry name" value="FrsA"/>
</dbReference>
<dbReference type="InterPro" id="IPR010520">
    <property type="entry name" value="FrsA-like"/>
</dbReference>
<dbReference type="InterPro" id="IPR050261">
    <property type="entry name" value="FrsA_esterase"/>
</dbReference>
<dbReference type="NCBIfam" id="NF003460">
    <property type="entry name" value="PRK05077.1"/>
    <property type="match status" value="1"/>
</dbReference>
<dbReference type="PANTHER" id="PTHR22946">
    <property type="entry name" value="DIENELACTONE HYDROLASE DOMAIN-CONTAINING PROTEIN-RELATED"/>
    <property type="match status" value="1"/>
</dbReference>
<dbReference type="PANTHER" id="PTHR22946:SF4">
    <property type="entry name" value="ESTERASE FRSA"/>
    <property type="match status" value="1"/>
</dbReference>
<dbReference type="Pfam" id="PF06500">
    <property type="entry name" value="FrsA-like"/>
    <property type="match status" value="1"/>
</dbReference>
<dbReference type="SUPFAM" id="SSF53474">
    <property type="entry name" value="alpha/beta-Hydrolases"/>
    <property type="match status" value="1"/>
</dbReference>
<name>FRSA_VIBCH</name>
<organism>
    <name type="scientific">Vibrio cholerae serotype O1 (strain ATCC 39315 / El Tor Inaba N16961)</name>
    <dbReference type="NCBI Taxonomy" id="243277"/>
    <lineage>
        <taxon>Bacteria</taxon>
        <taxon>Pseudomonadati</taxon>
        <taxon>Pseudomonadota</taxon>
        <taxon>Gammaproteobacteria</taxon>
        <taxon>Vibrionales</taxon>
        <taxon>Vibrionaceae</taxon>
        <taxon>Vibrio</taxon>
    </lineage>
</organism>
<gene>
    <name evidence="1" type="primary">frsA</name>
    <name type="ordered locus">VC_2276</name>
</gene>
<reference key="1">
    <citation type="journal article" date="2000" name="Nature">
        <title>DNA sequence of both chromosomes of the cholera pathogen Vibrio cholerae.</title>
        <authorList>
            <person name="Heidelberg J.F."/>
            <person name="Eisen J.A."/>
            <person name="Nelson W.C."/>
            <person name="Clayton R.A."/>
            <person name="Gwinn M.L."/>
            <person name="Dodson R.J."/>
            <person name="Haft D.H."/>
            <person name="Hickey E.K."/>
            <person name="Peterson J.D."/>
            <person name="Umayam L.A."/>
            <person name="Gill S.R."/>
            <person name="Nelson K.E."/>
            <person name="Read T.D."/>
            <person name="Tettelin H."/>
            <person name="Richardson D.L."/>
            <person name="Ermolaeva M.D."/>
            <person name="Vamathevan J.J."/>
            <person name="Bass S."/>
            <person name="Qin H."/>
            <person name="Dragoi I."/>
            <person name="Sellers P."/>
            <person name="McDonald L.A."/>
            <person name="Utterback T.R."/>
            <person name="Fleischmann R.D."/>
            <person name="Nierman W.C."/>
            <person name="White O."/>
            <person name="Salzberg S.L."/>
            <person name="Smith H.O."/>
            <person name="Colwell R.R."/>
            <person name="Mekalanos J.J."/>
            <person name="Venter J.C."/>
            <person name="Fraser C.M."/>
        </authorList>
    </citation>
    <scope>NUCLEOTIDE SEQUENCE [LARGE SCALE GENOMIC DNA]</scope>
    <source>
        <strain>ATCC 39315 / El Tor Inaba N16961</strain>
    </source>
</reference>